<organism>
    <name type="scientific">Escherichia coli (strain SE11)</name>
    <dbReference type="NCBI Taxonomy" id="409438"/>
    <lineage>
        <taxon>Bacteria</taxon>
        <taxon>Pseudomonadati</taxon>
        <taxon>Pseudomonadota</taxon>
        <taxon>Gammaproteobacteria</taxon>
        <taxon>Enterobacterales</taxon>
        <taxon>Enterobacteriaceae</taxon>
        <taxon>Escherichia</taxon>
    </lineage>
</organism>
<name>YBED_ECOSE</name>
<gene>
    <name evidence="1" type="primary">ybeD</name>
    <name type="ordered locus">ECSE_0698</name>
</gene>
<dbReference type="EMBL" id="AP009240">
    <property type="protein sequence ID" value="BAG76222.1"/>
    <property type="molecule type" value="Genomic_DNA"/>
</dbReference>
<dbReference type="RefSeq" id="WP_000850550.1">
    <property type="nucleotide sequence ID" value="NC_011415.1"/>
</dbReference>
<dbReference type="SMR" id="B6I140"/>
<dbReference type="GeneID" id="93776851"/>
<dbReference type="KEGG" id="ecy:ECSE_0698"/>
<dbReference type="HOGENOM" id="CLU_161438_2_1_6"/>
<dbReference type="Proteomes" id="UP000008199">
    <property type="component" value="Chromosome"/>
</dbReference>
<dbReference type="GO" id="GO:0005829">
    <property type="term" value="C:cytosol"/>
    <property type="evidence" value="ECO:0007669"/>
    <property type="project" value="TreeGrafter"/>
</dbReference>
<dbReference type="FunFam" id="3.30.70.260:FF:000002">
    <property type="entry name" value="UPF0250 protein YbeD"/>
    <property type="match status" value="1"/>
</dbReference>
<dbReference type="Gene3D" id="3.30.70.260">
    <property type="match status" value="1"/>
</dbReference>
<dbReference type="HAMAP" id="MF_00659">
    <property type="entry name" value="UPF0250"/>
    <property type="match status" value="1"/>
</dbReference>
<dbReference type="InterPro" id="IPR007454">
    <property type="entry name" value="UPF0250_YbeD-like"/>
</dbReference>
<dbReference type="InterPro" id="IPR027471">
    <property type="entry name" value="YbeD-like_sf"/>
</dbReference>
<dbReference type="NCBIfam" id="NF003447">
    <property type="entry name" value="PRK04998.1"/>
    <property type="match status" value="1"/>
</dbReference>
<dbReference type="PANTHER" id="PTHR38036">
    <property type="entry name" value="UPF0250 PROTEIN YBED"/>
    <property type="match status" value="1"/>
</dbReference>
<dbReference type="PANTHER" id="PTHR38036:SF1">
    <property type="entry name" value="UPF0250 PROTEIN YBED"/>
    <property type="match status" value="1"/>
</dbReference>
<dbReference type="Pfam" id="PF04359">
    <property type="entry name" value="DUF493"/>
    <property type="match status" value="1"/>
</dbReference>
<dbReference type="SUPFAM" id="SSF117991">
    <property type="entry name" value="YbeD/HP0495-like"/>
    <property type="match status" value="1"/>
</dbReference>
<comment type="similarity">
    <text evidence="1">Belongs to the UPF0250 family.</text>
</comment>
<feature type="chain" id="PRO_1000131244" description="UPF0250 protein YbeD">
    <location>
        <begin position="1"/>
        <end position="87"/>
    </location>
</feature>
<protein>
    <recommendedName>
        <fullName evidence="1">UPF0250 protein YbeD</fullName>
    </recommendedName>
</protein>
<reference key="1">
    <citation type="journal article" date="2008" name="DNA Res.">
        <title>Complete genome sequence and comparative analysis of the wild-type commensal Escherichia coli strain SE11 isolated from a healthy adult.</title>
        <authorList>
            <person name="Oshima K."/>
            <person name="Toh H."/>
            <person name="Ogura Y."/>
            <person name="Sasamoto H."/>
            <person name="Morita H."/>
            <person name="Park S.-H."/>
            <person name="Ooka T."/>
            <person name="Iyoda S."/>
            <person name="Taylor T.D."/>
            <person name="Hayashi T."/>
            <person name="Itoh K."/>
            <person name="Hattori M."/>
        </authorList>
    </citation>
    <scope>NUCLEOTIDE SEQUENCE [LARGE SCALE GENOMIC DNA]</scope>
    <source>
        <strain>SE11</strain>
    </source>
</reference>
<sequence length="87" mass="9827">MKTKLNELLEFPTPFTYKVMGQALPELVDQVVEVVQRHAPGDYTPTVKPSSKGNYHSVSITINATHIEQVETLYEELGKIDIVRMVL</sequence>
<evidence type="ECO:0000255" key="1">
    <source>
        <dbReference type="HAMAP-Rule" id="MF_00659"/>
    </source>
</evidence>
<accession>B6I140</accession>
<proteinExistence type="inferred from homology"/>